<name>MUG_SHIDS</name>
<comment type="function">
    <text evidence="1">Excises ethenocytosine and uracil, which can arise by alkylation or deamination of cytosine, respectively, from the corresponding mispairs with guanine in ds-DNA. It is capable of hydrolyzing the carbon-nitrogen bond between the sugar-phosphate backbone of the DNA and the mispaired base. The complementary strand guanine functions in substrate recognition. Required for DNA damage lesion repair in stationary-phase cells.</text>
</comment>
<comment type="catalytic activity">
    <reaction evidence="1">
        <text>Specifically hydrolyzes mismatched double-stranded DNA and polynucleotides, releasing free uracil.</text>
        <dbReference type="EC" id="3.2.2.28"/>
    </reaction>
</comment>
<comment type="subunit">
    <text evidence="1">Binds DNA as a monomer.</text>
</comment>
<comment type="subcellular location">
    <subcellularLocation>
        <location evidence="1">Cytoplasm</location>
    </subcellularLocation>
</comment>
<comment type="similarity">
    <text evidence="1">Belongs to the uracil-DNA glycosylase (UDG) superfamily. TDG/mug family.</text>
</comment>
<accession>Q32BP9</accession>
<proteinExistence type="inferred from homology"/>
<sequence>MVEDILAPGLRVVFCGINPGLSSAGTGFPFAHPANRFWKVIYQAGFTDRQLKPQEAQHLLDYRCGVTKLVDRPTVQANEISNQELHAGGRKLIEKIEDYQPQALAILGKQAYEQGFSQRGAQWGKQTLSIGSTQIWVLPNPSGLSRVSLEKLVEAYRELDQALVVRGR</sequence>
<protein>
    <recommendedName>
        <fullName evidence="1">G/U mismatch-specific DNA glycosylase</fullName>
        <ecNumber evidence="1">3.2.2.28</ecNumber>
    </recommendedName>
    <alternativeName>
        <fullName evidence="1">Double-strand-specific uracil glycosylase</fullName>
    </alternativeName>
    <alternativeName>
        <fullName evidence="1">Mismatch-specific uracil DNA-glycosylase</fullName>
        <shortName evidence="1">MUG</shortName>
    </alternativeName>
</protein>
<reference key="1">
    <citation type="journal article" date="2005" name="Nucleic Acids Res.">
        <title>Genome dynamics and diversity of Shigella species, the etiologic agents of bacillary dysentery.</title>
        <authorList>
            <person name="Yang F."/>
            <person name="Yang J."/>
            <person name="Zhang X."/>
            <person name="Chen L."/>
            <person name="Jiang Y."/>
            <person name="Yan Y."/>
            <person name="Tang X."/>
            <person name="Wang J."/>
            <person name="Xiong Z."/>
            <person name="Dong J."/>
            <person name="Xue Y."/>
            <person name="Zhu Y."/>
            <person name="Xu X."/>
            <person name="Sun L."/>
            <person name="Chen S."/>
            <person name="Nie H."/>
            <person name="Peng J."/>
            <person name="Xu J."/>
            <person name="Wang Y."/>
            <person name="Yuan Z."/>
            <person name="Wen Y."/>
            <person name="Yao Z."/>
            <person name="Shen Y."/>
            <person name="Qiang B."/>
            <person name="Hou Y."/>
            <person name="Yu J."/>
            <person name="Jin Q."/>
        </authorList>
    </citation>
    <scope>NUCLEOTIDE SEQUENCE [LARGE SCALE GENOMIC DNA]</scope>
    <source>
        <strain>Sd197</strain>
    </source>
</reference>
<evidence type="ECO:0000255" key="1">
    <source>
        <dbReference type="HAMAP-Rule" id="MF_01956"/>
    </source>
</evidence>
<organism>
    <name type="scientific">Shigella dysenteriae serotype 1 (strain Sd197)</name>
    <dbReference type="NCBI Taxonomy" id="300267"/>
    <lineage>
        <taxon>Bacteria</taxon>
        <taxon>Pseudomonadati</taxon>
        <taxon>Pseudomonadota</taxon>
        <taxon>Gammaproteobacteria</taxon>
        <taxon>Enterobacterales</taxon>
        <taxon>Enterobacteriaceae</taxon>
        <taxon>Shigella</taxon>
    </lineage>
</organism>
<gene>
    <name evidence="1" type="primary">mug</name>
    <name type="ordered locus">SDY_3252</name>
</gene>
<keyword id="KW-0963">Cytoplasm</keyword>
<keyword id="KW-0227">DNA damage</keyword>
<keyword id="KW-0228">DNA excision</keyword>
<keyword id="KW-0234">DNA repair</keyword>
<keyword id="KW-0238">DNA-binding</keyword>
<keyword id="KW-0378">Hydrolase</keyword>
<keyword id="KW-1185">Reference proteome</keyword>
<feature type="chain" id="PRO_0000238686" description="G/U mismatch-specific DNA glycosylase">
    <location>
        <begin position="1"/>
        <end position="168"/>
    </location>
</feature>
<dbReference type="EC" id="3.2.2.28" evidence="1"/>
<dbReference type="EMBL" id="CP000034">
    <property type="protein sequence ID" value="ABB63256.1"/>
    <property type="molecule type" value="Genomic_DNA"/>
</dbReference>
<dbReference type="RefSeq" id="WP_000228931.1">
    <property type="nucleotide sequence ID" value="NC_007606.1"/>
</dbReference>
<dbReference type="RefSeq" id="YP_404747.1">
    <property type="nucleotide sequence ID" value="NC_007606.1"/>
</dbReference>
<dbReference type="SMR" id="Q32BP9"/>
<dbReference type="STRING" id="300267.SDY_3252"/>
<dbReference type="EnsemblBacteria" id="ABB63256">
    <property type="protein sequence ID" value="ABB63256"/>
    <property type="gene ID" value="SDY_3252"/>
</dbReference>
<dbReference type="KEGG" id="sdy:SDY_3252"/>
<dbReference type="PATRIC" id="fig|300267.13.peg.3887"/>
<dbReference type="HOGENOM" id="CLU_042829_3_1_6"/>
<dbReference type="Proteomes" id="UP000002716">
    <property type="component" value="Chromosome"/>
</dbReference>
<dbReference type="GO" id="GO:0005737">
    <property type="term" value="C:cytoplasm"/>
    <property type="evidence" value="ECO:0007669"/>
    <property type="project" value="UniProtKB-SubCell"/>
</dbReference>
<dbReference type="GO" id="GO:0003677">
    <property type="term" value="F:DNA binding"/>
    <property type="evidence" value="ECO:0007669"/>
    <property type="project" value="UniProtKB-KW"/>
</dbReference>
<dbReference type="GO" id="GO:0008263">
    <property type="term" value="F:pyrimidine-specific mismatch base pair DNA N-glycosylase activity"/>
    <property type="evidence" value="ECO:0007669"/>
    <property type="project" value="UniProtKB-UniRule"/>
</dbReference>
<dbReference type="GO" id="GO:0004844">
    <property type="term" value="F:uracil DNA N-glycosylase activity"/>
    <property type="evidence" value="ECO:0007669"/>
    <property type="project" value="TreeGrafter"/>
</dbReference>
<dbReference type="GO" id="GO:0006285">
    <property type="term" value="P:base-excision repair, AP site formation"/>
    <property type="evidence" value="ECO:0007669"/>
    <property type="project" value="UniProtKB-UniRule"/>
</dbReference>
<dbReference type="CDD" id="cd10028">
    <property type="entry name" value="UDG-F2_TDG_MUG"/>
    <property type="match status" value="1"/>
</dbReference>
<dbReference type="FunFam" id="3.40.470.10:FF:000003">
    <property type="entry name" value="G/U mismatch-specific DNA glycosylase"/>
    <property type="match status" value="1"/>
</dbReference>
<dbReference type="Gene3D" id="3.40.470.10">
    <property type="entry name" value="Uracil-DNA glycosylase-like domain"/>
    <property type="match status" value="1"/>
</dbReference>
<dbReference type="HAMAP" id="MF_01956">
    <property type="entry name" value="MUG"/>
    <property type="match status" value="1"/>
</dbReference>
<dbReference type="InterPro" id="IPR015637">
    <property type="entry name" value="MUG/TDG"/>
</dbReference>
<dbReference type="InterPro" id="IPR023502">
    <property type="entry name" value="MUG_bact"/>
</dbReference>
<dbReference type="InterPro" id="IPR005122">
    <property type="entry name" value="Uracil-DNA_glycosylase-like"/>
</dbReference>
<dbReference type="InterPro" id="IPR036895">
    <property type="entry name" value="Uracil-DNA_glycosylase-like_sf"/>
</dbReference>
<dbReference type="NCBIfam" id="NF007570">
    <property type="entry name" value="PRK10201.1"/>
    <property type="match status" value="1"/>
</dbReference>
<dbReference type="PANTHER" id="PTHR12159">
    <property type="entry name" value="G/T AND G/U MISMATCH-SPECIFIC DNA GLYCOSYLASE"/>
    <property type="match status" value="1"/>
</dbReference>
<dbReference type="PANTHER" id="PTHR12159:SF9">
    <property type="entry name" value="G_T MISMATCH-SPECIFIC THYMINE DNA GLYCOSYLASE"/>
    <property type="match status" value="1"/>
</dbReference>
<dbReference type="Pfam" id="PF03167">
    <property type="entry name" value="UDG"/>
    <property type="match status" value="1"/>
</dbReference>
<dbReference type="SUPFAM" id="SSF52141">
    <property type="entry name" value="Uracil-DNA glycosylase-like"/>
    <property type="match status" value="1"/>
</dbReference>